<keyword id="KW-0150">Chloroplast</keyword>
<keyword id="KW-0507">mRNA processing</keyword>
<keyword id="KW-0934">Plastid</keyword>
<keyword id="KW-0694">RNA-binding</keyword>
<keyword id="KW-0819">tRNA processing</keyword>
<proteinExistence type="inferred from homology"/>
<name>MATK_CHLSC</name>
<organism>
    <name type="scientific">Chloranthus spicatus</name>
    <name type="common">Chulantree</name>
    <name type="synonym">Nigrina spicata</name>
    <dbReference type="NCBI Taxonomy" id="13006"/>
    <lineage>
        <taxon>Eukaryota</taxon>
        <taxon>Viridiplantae</taxon>
        <taxon>Streptophyta</taxon>
        <taxon>Embryophyta</taxon>
        <taxon>Tracheophyta</taxon>
        <taxon>Spermatophyta</taxon>
        <taxon>Magnoliopsida</taxon>
        <taxon>Chloranthales</taxon>
        <taxon>Chloranthaceae</taxon>
        <taxon>Chloranthus</taxon>
    </lineage>
</organism>
<reference key="1">
    <citation type="journal article" date="2007" name="Mol. Phylogenet. Evol.">
        <title>Phylogenetic and evolutionary implications of complete chloroplast genome sequences of four early-diverging angiosperms: Buxus (Buxaceae), Chloranthus (Chloranthaceae), Dioscorea (Dioscoreaceae), and Illicium (Schisandraceae).</title>
        <authorList>
            <person name="Hansen D.R."/>
            <person name="Dastidar S.G."/>
            <person name="Cai Z."/>
            <person name="Penaflor C."/>
            <person name="Kuehl J.V."/>
            <person name="Boore J.L."/>
            <person name="Jansen R.K."/>
        </authorList>
    </citation>
    <scope>NUCLEOTIDE SEQUENCE [LARGE SCALE GENOMIC DNA]</scope>
</reference>
<sequence length="511" mass="60697">MEELQRYLEIDRSRQQHFLYPLLFQEYIYVLAHDHGLNGSILYESMENLGYDNKSSSLIIKRLIIRMHQQNHLMISVNHSNQNRFLGYNKNFDYQMISEGFAVIVEIPFSLQLVSSLEEKEIAKFHNLRSIHSILPFLEDKFSHLNYVSDILIPYPTHLEILVQTLHRWIQDAPSLHLLRFFLHEYTNWNSFITPKKSIYLFTKDFTKENQRLFLFLYNSHVYECESVFIFLRKQSSYLGSKYSGAFIERTHFYGKMEYLVVVLRNDFQKTLWLFKDPFMHYVRYQGKAILASKGAHLLMKKWKYHLVNFWQCHFYLWYQPDRIHINQLSNHSFYFLGYLSSVLLNLSAVRSQMLENSFLINTAIKKFDTIVPIIPLIGALAKAKFCNISGHPISKPVRVDSSDSDIIDRFGRICRNLSHYHSGSSKKQSLYRIKYILRFSCARTLARKHKSTVRTFLKRLGSELLEEFLTEKEQVISLIFAINSSPSHRSYRERIWYLDILCINDLANHE</sequence>
<evidence type="ECO:0000255" key="1">
    <source>
        <dbReference type="HAMAP-Rule" id="MF_01390"/>
    </source>
</evidence>
<accession>A6MMA3</accession>
<dbReference type="EMBL" id="EF380352">
    <property type="protein sequence ID" value="ABQ43241.1"/>
    <property type="molecule type" value="Genomic_DNA"/>
</dbReference>
<dbReference type="RefSeq" id="YP_001294079.1">
    <property type="nucleotide sequence ID" value="NC_009598.1"/>
</dbReference>
<dbReference type="GeneID" id="5236443"/>
<dbReference type="GO" id="GO:0009507">
    <property type="term" value="C:chloroplast"/>
    <property type="evidence" value="ECO:0007669"/>
    <property type="project" value="UniProtKB-SubCell"/>
</dbReference>
<dbReference type="GO" id="GO:0003723">
    <property type="term" value="F:RNA binding"/>
    <property type="evidence" value="ECO:0007669"/>
    <property type="project" value="UniProtKB-KW"/>
</dbReference>
<dbReference type="GO" id="GO:0006397">
    <property type="term" value="P:mRNA processing"/>
    <property type="evidence" value="ECO:0007669"/>
    <property type="project" value="UniProtKB-KW"/>
</dbReference>
<dbReference type="GO" id="GO:0008380">
    <property type="term" value="P:RNA splicing"/>
    <property type="evidence" value="ECO:0007669"/>
    <property type="project" value="UniProtKB-UniRule"/>
</dbReference>
<dbReference type="GO" id="GO:0008033">
    <property type="term" value="P:tRNA processing"/>
    <property type="evidence" value="ECO:0007669"/>
    <property type="project" value="UniProtKB-KW"/>
</dbReference>
<dbReference type="HAMAP" id="MF_01390">
    <property type="entry name" value="MatK"/>
    <property type="match status" value="1"/>
</dbReference>
<dbReference type="InterPro" id="IPR024937">
    <property type="entry name" value="Domain_X"/>
</dbReference>
<dbReference type="InterPro" id="IPR002866">
    <property type="entry name" value="Maturase_MatK"/>
</dbReference>
<dbReference type="InterPro" id="IPR024942">
    <property type="entry name" value="Maturase_MatK_N"/>
</dbReference>
<dbReference type="PANTHER" id="PTHR34811">
    <property type="entry name" value="MATURASE K"/>
    <property type="match status" value="1"/>
</dbReference>
<dbReference type="PANTHER" id="PTHR34811:SF1">
    <property type="entry name" value="MATURASE K"/>
    <property type="match status" value="1"/>
</dbReference>
<dbReference type="Pfam" id="PF01348">
    <property type="entry name" value="Intron_maturas2"/>
    <property type="match status" value="1"/>
</dbReference>
<dbReference type="Pfam" id="PF01824">
    <property type="entry name" value="MatK_N"/>
    <property type="match status" value="1"/>
</dbReference>
<feature type="chain" id="PRO_0000355922" description="Maturase K">
    <location>
        <begin position="1"/>
        <end position="511"/>
    </location>
</feature>
<gene>
    <name evidence="1" type="primary">matK</name>
</gene>
<geneLocation type="chloroplast"/>
<comment type="function">
    <text evidence="1">Usually encoded in the trnK tRNA gene intron. Probably assists in splicing its own and other chloroplast group II introns.</text>
</comment>
<comment type="subcellular location">
    <subcellularLocation>
        <location>Plastid</location>
        <location>Chloroplast</location>
    </subcellularLocation>
</comment>
<comment type="similarity">
    <text evidence="1">Belongs to the intron maturase 2 family. MatK subfamily.</text>
</comment>
<protein>
    <recommendedName>
        <fullName evidence="1">Maturase K</fullName>
    </recommendedName>
    <alternativeName>
        <fullName evidence="1">Intron maturase</fullName>
    </alternativeName>
</protein>